<reference key="1">
    <citation type="submission" date="2009-04" db="EMBL/GenBank/DDBJ databases">
        <title>Genome sequence of Bacillus anthracis A0248.</title>
        <authorList>
            <person name="Dodson R.J."/>
            <person name="Munk A.C."/>
            <person name="Bruce D."/>
            <person name="Detter C."/>
            <person name="Tapia R."/>
            <person name="Sutton G."/>
            <person name="Sims D."/>
            <person name="Brettin T."/>
        </authorList>
    </citation>
    <scope>NUCLEOTIDE SEQUENCE [LARGE SCALE GENOMIC DNA]</scope>
    <source>
        <strain>A0248</strain>
    </source>
</reference>
<name>RIMP_BACAA</name>
<protein>
    <recommendedName>
        <fullName evidence="1">Ribosome maturation factor RimP</fullName>
    </recommendedName>
</protein>
<evidence type="ECO:0000255" key="1">
    <source>
        <dbReference type="HAMAP-Rule" id="MF_01077"/>
    </source>
</evidence>
<sequence length="156" mass="17696">MDKKVTEVVEAFAQPIVEELNLELVDVEYVKEGQDWFLRVFIDSEKGVDIEECGAVSERLSEALDKEDPIPHLYFLDVSSPGAERPLKKEKDFQQAVGKQVAIKTYEPIDGEKMFEGKMLSYDGTTITLLLTIKTRKKEIQIPMDKVANARLAVTF</sequence>
<keyword id="KW-0963">Cytoplasm</keyword>
<keyword id="KW-0690">Ribosome biogenesis</keyword>
<accession>C3P5L9</accession>
<organism>
    <name type="scientific">Bacillus anthracis (strain A0248)</name>
    <dbReference type="NCBI Taxonomy" id="592021"/>
    <lineage>
        <taxon>Bacteria</taxon>
        <taxon>Bacillati</taxon>
        <taxon>Bacillota</taxon>
        <taxon>Bacilli</taxon>
        <taxon>Bacillales</taxon>
        <taxon>Bacillaceae</taxon>
        <taxon>Bacillus</taxon>
        <taxon>Bacillus cereus group</taxon>
    </lineage>
</organism>
<comment type="function">
    <text evidence="1">Required for maturation of 30S ribosomal subunits.</text>
</comment>
<comment type="subcellular location">
    <subcellularLocation>
        <location evidence="1">Cytoplasm</location>
    </subcellularLocation>
</comment>
<comment type="similarity">
    <text evidence="1">Belongs to the RimP family.</text>
</comment>
<dbReference type="EMBL" id="CP001598">
    <property type="protein sequence ID" value="ACQ49192.1"/>
    <property type="molecule type" value="Genomic_DNA"/>
</dbReference>
<dbReference type="RefSeq" id="WP_000359097.1">
    <property type="nucleotide sequence ID" value="NC_012659.1"/>
</dbReference>
<dbReference type="SMR" id="C3P5L9"/>
<dbReference type="GeneID" id="93007295"/>
<dbReference type="KEGG" id="bai:BAA_3978"/>
<dbReference type="HOGENOM" id="CLU_070525_2_0_9"/>
<dbReference type="GO" id="GO:0005829">
    <property type="term" value="C:cytosol"/>
    <property type="evidence" value="ECO:0007669"/>
    <property type="project" value="TreeGrafter"/>
</dbReference>
<dbReference type="GO" id="GO:0000028">
    <property type="term" value="P:ribosomal small subunit assembly"/>
    <property type="evidence" value="ECO:0007669"/>
    <property type="project" value="TreeGrafter"/>
</dbReference>
<dbReference type="GO" id="GO:0006412">
    <property type="term" value="P:translation"/>
    <property type="evidence" value="ECO:0007669"/>
    <property type="project" value="TreeGrafter"/>
</dbReference>
<dbReference type="CDD" id="cd01734">
    <property type="entry name" value="YlxS_C"/>
    <property type="match status" value="1"/>
</dbReference>
<dbReference type="FunFam" id="2.30.30.180:FF:000002">
    <property type="entry name" value="Ribosome maturation factor RimP"/>
    <property type="match status" value="1"/>
</dbReference>
<dbReference type="FunFam" id="3.30.300.70:FF:000001">
    <property type="entry name" value="Ribosome maturation factor RimP"/>
    <property type="match status" value="1"/>
</dbReference>
<dbReference type="Gene3D" id="2.30.30.180">
    <property type="entry name" value="Ribosome maturation factor RimP, C-terminal domain"/>
    <property type="match status" value="1"/>
</dbReference>
<dbReference type="Gene3D" id="3.30.300.70">
    <property type="entry name" value="RimP-like superfamily, N-terminal"/>
    <property type="match status" value="1"/>
</dbReference>
<dbReference type="HAMAP" id="MF_01077">
    <property type="entry name" value="RimP"/>
    <property type="match status" value="1"/>
</dbReference>
<dbReference type="InterPro" id="IPR003728">
    <property type="entry name" value="Ribosome_maturation_RimP"/>
</dbReference>
<dbReference type="InterPro" id="IPR028998">
    <property type="entry name" value="RimP_C"/>
</dbReference>
<dbReference type="InterPro" id="IPR036847">
    <property type="entry name" value="RimP_C_sf"/>
</dbReference>
<dbReference type="InterPro" id="IPR028989">
    <property type="entry name" value="RimP_N"/>
</dbReference>
<dbReference type="InterPro" id="IPR035956">
    <property type="entry name" value="RimP_N_sf"/>
</dbReference>
<dbReference type="NCBIfam" id="NF000928">
    <property type="entry name" value="PRK00092.1-2"/>
    <property type="match status" value="1"/>
</dbReference>
<dbReference type="PANTHER" id="PTHR33867">
    <property type="entry name" value="RIBOSOME MATURATION FACTOR RIMP"/>
    <property type="match status" value="1"/>
</dbReference>
<dbReference type="PANTHER" id="PTHR33867:SF1">
    <property type="entry name" value="RIBOSOME MATURATION FACTOR RIMP"/>
    <property type="match status" value="1"/>
</dbReference>
<dbReference type="Pfam" id="PF17384">
    <property type="entry name" value="DUF150_C"/>
    <property type="match status" value="1"/>
</dbReference>
<dbReference type="Pfam" id="PF02576">
    <property type="entry name" value="RimP_N"/>
    <property type="match status" value="1"/>
</dbReference>
<dbReference type="SUPFAM" id="SSF74942">
    <property type="entry name" value="YhbC-like, C-terminal domain"/>
    <property type="match status" value="1"/>
</dbReference>
<dbReference type="SUPFAM" id="SSF75420">
    <property type="entry name" value="YhbC-like, N-terminal domain"/>
    <property type="match status" value="1"/>
</dbReference>
<gene>
    <name evidence="1" type="primary">rimP</name>
    <name type="ordered locus">BAA_3978</name>
</gene>
<feature type="chain" id="PRO_1000149778" description="Ribosome maturation factor RimP">
    <location>
        <begin position="1"/>
        <end position="156"/>
    </location>
</feature>
<proteinExistence type="inferred from homology"/>